<evidence type="ECO:0000255" key="1">
    <source>
        <dbReference type="HAMAP-Rule" id="MF_00046"/>
    </source>
</evidence>
<sequence>MKHRIQHIHFVGVGGSGMSGIAEVLLNLGYTVSGSDLSESTVTRRLADLGLKVSIGHAAENVADADAIVTSTAVAGDNPEVIAARLARIPVVPRAVMLAELMRLKRGIAVAGTHGKTTTTSLVASVLAAGGLDPTFVIGGRLNSAGANAQLGQGEFIVVEADESDASFLNLLPVMAIITNIDADHMDTYGHDVARLKSAFIEFTQRLPFYGSAVLCADDANVREIMPFVSRPITTYGLSSDAQVRAENVQADGTRMRFSVRRQGREQDLPTLEVELNLPGLHNVRNALAAIAVASELGVADAAICQALAGFKGVGRRFTQWGEFPVAEAQGGGRYSVIDDYGHHPVEMAATLAAARGAWPDRRIVLAFQPHRYTRTRDCFEDFVRVLGTADAVLLTEVYAAGEAPLVAADGRALARALRVAGKVEPLFVEDVAALPQAVRDFMRDGDVLILMGAGSISKVPSQLGEHA</sequence>
<organism>
    <name type="scientific">Bordetella avium (strain 197N)</name>
    <dbReference type="NCBI Taxonomy" id="360910"/>
    <lineage>
        <taxon>Bacteria</taxon>
        <taxon>Pseudomonadati</taxon>
        <taxon>Pseudomonadota</taxon>
        <taxon>Betaproteobacteria</taxon>
        <taxon>Burkholderiales</taxon>
        <taxon>Alcaligenaceae</taxon>
        <taxon>Bordetella</taxon>
    </lineage>
</organism>
<keyword id="KW-0067">ATP-binding</keyword>
<keyword id="KW-0131">Cell cycle</keyword>
<keyword id="KW-0132">Cell division</keyword>
<keyword id="KW-0133">Cell shape</keyword>
<keyword id="KW-0961">Cell wall biogenesis/degradation</keyword>
<keyword id="KW-0963">Cytoplasm</keyword>
<keyword id="KW-0436">Ligase</keyword>
<keyword id="KW-0547">Nucleotide-binding</keyword>
<keyword id="KW-0573">Peptidoglycan synthesis</keyword>
<keyword id="KW-1185">Reference proteome</keyword>
<reference key="1">
    <citation type="journal article" date="2006" name="J. Bacteriol.">
        <title>Comparison of the genome sequence of the poultry pathogen Bordetella avium with those of B. bronchiseptica, B. pertussis, and B. parapertussis reveals extensive diversity in surface structures associated with host interaction.</title>
        <authorList>
            <person name="Sebaihia M."/>
            <person name="Preston A."/>
            <person name="Maskell D.J."/>
            <person name="Kuzmiak H."/>
            <person name="Connell T.D."/>
            <person name="King N.D."/>
            <person name="Orndorff P.E."/>
            <person name="Miyamoto D.M."/>
            <person name="Thomson N.R."/>
            <person name="Harris D."/>
            <person name="Goble A."/>
            <person name="Lord A."/>
            <person name="Murphy L."/>
            <person name="Quail M.A."/>
            <person name="Rutter S."/>
            <person name="Squares R."/>
            <person name="Squares S."/>
            <person name="Woodward J."/>
            <person name="Parkhill J."/>
            <person name="Temple L.M."/>
        </authorList>
    </citation>
    <scope>NUCLEOTIDE SEQUENCE [LARGE SCALE GENOMIC DNA]</scope>
    <source>
        <strain>197N</strain>
    </source>
</reference>
<dbReference type="EC" id="6.3.2.8" evidence="1"/>
<dbReference type="EMBL" id="AM167904">
    <property type="protein sequence ID" value="CAJ50488.1"/>
    <property type="molecule type" value="Genomic_DNA"/>
</dbReference>
<dbReference type="RefSeq" id="WP_012418518.1">
    <property type="nucleotide sequence ID" value="NC_010645.1"/>
</dbReference>
<dbReference type="SMR" id="Q2KVG1"/>
<dbReference type="STRING" id="360910.BAV2878"/>
<dbReference type="KEGG" id="bav:BAV2878"/>
<dbReference type="eggNOG" id="COG0773">
    <property type="taxonomic scope" value="Bacteria"/>
</dbReference>
<dbReference type="HOGENOM" id="CLU_028104_2_2_4"/>
<dbReference type="OrthoDB" id="9804126at2"/>
<dbReference type="UniPathway" id="UPA00219"/>
<dbReference type="Proteomes" id="UP000001977">
    <property type="component" value="Chromosome"/>
</dbReference>
<dbReference type="GO" id="GO:0005737">
    <property type="term" value="C:cytoplasm"/>
    <property type="evidence" value="ECO:0007669"/>
    <property type="project" value="UniProtKB-SubCell"/>
</dbReference>
<dbReference type="GO" id="GO:0005524">
    <property type="term" value="F:ATP binding"/>
    <property type="evidence" value="ECO:0007669"/>
    <property type="project" value="UniProtKB-UniRule"/>
</dbReference>
<dbReference type="GO" id="GO:0008763">
    <property type="term" value="F:UDP-N-acetylmuramate-L-alanine ligase activity"/>
    <property type="evidence" value="ECO:0007669"/>
    <property type="project" value="UniProtKB-UniRule"/>
</dbReference>
<dbReference type="GO" id="GO:0051301">
    <property type="term" value="P:cell division"/>
    <property type="evidence" value="ECO:0007669"/>
    <property type="project" value="UniProtKB-KW"/>
</dbReference>
<dbReference type="GO" id="GO:0071555">
    <property type="term" value="P:cell wall organization"/>
    <property type="evidence" value="ECO:0007669"/>
    <property type="project" value="UniProtKB-KW"/>
</dbReference>
<dbReference type="GO" id="GO:0009252">
    <property type="term" value="P:peptidoglycan biosynthetic process"/>
    <property type="evidence" value="ECO:0007669"/>
    <property type="project" value="UniProtKB-UniRule"/>
</dbReference>
<dbReference type="GO" id="GO:0008360">
    <property type="term" value="P:regulation of cell shape"/>
    <property type="evidence" value="ECO:0007669"/>
    <property type="project" value="UniProtKB-KW"/>
</dbReference>
<dbReference type="FunFam" id="3.40.1190.10:FF:000001">
    <property type="entry name" value="UDP-N-acetylmuramate--L-alanine ligase"/>
    <property type="match status" value="1"/>
</dbReference>
<dbReference type="Gene3D" id="3.90.190.20">
    <property type="entry name" value="Mur ligase, C-terminal domain"/>
    <property type="match status" value="1"/>
</dbReference>
<dbReference type="Gene3D" id="3.40.1190.10">
    <property type="entry name" value="Mur-like, catalytic domain"/>
    <property type="match status" value="1"/>
</dbReference>
<dbReference type="Gene3D" id="3.40.50.720">
    <property type="entry name" value="NAD(P)-binding Rossmann-like Domain"/>
    <property type="match status" value="1"/>
</dbReference>
<dbReference type="HAMAP" id="MF_00046">
    <property type="entry name" value="MurC"/>
    <property type="match status" value="1"/>
</dbReference>
<dbReference type="InterPro" id="IPR036565">
    <property type="entry name" value="Mur-like_cat_sf"/>
</dbReference>
<dbReference type="InterPro" id="IPR004101">
    <property type="entry name" value="Mur_ligase_C"/>
</dbReference>
<dbReference type="InterPro" id="IPR036615">
    <property type="entry name" value="Mur_ligase_C_dom_sf"/>
</dbReference>
<dbReference type="InterPro" id="IPR013221">
    <property type="entry name" value="Mur_ligase_cen"/>
</dbReference>
<dbReference type="InterPro" id="IPR000713">
    <property type="entry name" value="Mur_ligase_N"/>
</dbReference>
<dbReference type="InterPro" id="IPR050061">
    <property type="entry name" value="MurCDEF_pg_biosynth"/>
</dbReference>
<dbReference type="InterPro" id="IPR005758">
    <property type="entry name" value="UDP-N-AcMur_Ala_ligase_MurC"/>
</dbReference>
<dbReference type="NCBIfam" id="TIGR01082">
    <property type="entry name" value="murC"/>
    <property type="match status" value="1"/>
</dbReference>
<dbReference type="PANTHER" id="PTHR43445:SF3">
    <property type="entry name" value="UDP-N-ACETYLMURAMATE--L-ALANINE LIGASE"/>
    <property type="match status" value="1"/>
</dbReference>
<dbReference type="PANTHER" id="PTHR43445">
    <property type="entry name" value="UDP-N-ACETYLMURAMATE--L-ALANINE LIGASE-RELATED"/>
    <property type="match status" value="1"/>
</dbReference>
<dbReference type="Pfam" id="PF01225">
    <property type="entry name" value="Mur_ligase"/>
    <property type="match status" value="1"/>
</dbReference>
<dbReference type="Pfam" id="PF02875">
    <property type="entry name" value="Mur_ligase_C"/>
    <property type="match status" value="1"/>
</dbReference>
<dbReference type="Pfam" id="PF08245">
    <property type="entry name" value="Mur_ligase_M"/>
    <property type="match status" value="1"/>
</dbReference>
<dbReference type="SUPFAM" id="SSF51984">
    <property type="entry name" value="MurCD N-terminal domain"/>
    <property type="match status" value="1"/>
</dbReference>
<dbReference type="SUPFAM" id="SSF53623">
    <property type="entry name" value="MurD-like peptide ligases, catalytic domain"/>
    <property type="match status" value="1"/>
</dbReference>
<dbReference type="SUPFAM" id="SSF53244">
    <property type="entry name" value="MurD-like peptide ligases, peptide-binding domain"/>
    <property type="match status" value="1"/>
</dbReference>
<feature type="chain" id="PRO_0000242544" description="UDP-N-acetylmuramate--L-alanine ligase">
    <location>
        <begin position="1"/>
        <end position="468"/>
    </location>
</feature>
<feature type="binding site" evidence="1">
    <location>
        <begin position="112"/>
        <end position="118"/>
    </location>
    <ligand>
        <name>ATP</name>
        <dbReference type="ChEBI" id="CHEBI:30616"/>
    </ligand>
</feature>
<name>MURC_BORA1</name>
<gene>
    <name evidence="1" type="primary">murC</name>
    <name type="ordered locus">BAV2878</name>
</gene>
<protein>
    <recommendedName>
        <fullName evidence="1">UDP-N-acetylmuramate--L-alanine ligase</fullName>
        <ecNumber evidence="1">6.3.2.8</ecNumber>
    </recommendedName>
    <alternativeName>
        <fullName evidence="1">UDP-N-acetylmuramoyl-L-alanine synthetase</fullName>
    </alternativeName>
</protein>
<comment type="function">
    <text evidence="1">Cell wall formation.</text>
</comment>
<comment type="catalytic activity">
    <reaction evidence="1">
        <text>UDP-N-acetyl-alpha-D-muramate + L-alanine + ATP = UDP-N-acetyl-alpha-D-muramoyl-L-alanine + ADP + phosphate + H(+)</text>
        <dbReference type="Rhea" id="RHEA:23372"/>
        <dbReference type="ChEBI" id="CHEBI:15378"/>
        <dbReference type="ChEBI" id="CHEBI:30616"/>
        <dbReference type="ChEBI" id="CHEBI:43474"/>
        <dbReference type="ChEBI" id="CHEBI:57972"/>
        <dbReference type="ChEBI" id="CHEBI:70757"/>
        <dbReference type="ChEBI" id="CHEBI:83898"/>
        <dbReference type="ChEBI" id="CHEBI:456216"/>
        <dbReference type="EC" id="6.3.2.8"/>
    </reaction>
</comment>
<comment type="pathway">
    <text evidence="1">Cell wall biogenesis; peptidoglycan biosynthesis.</text>
</comment>
<comment type="subcellular location">
    <subcellularLocation>
        <location evidence="1">Cytoplasm</location>
    </subcellularLocation>
</comment>
<comment type="similarity">
    <text evidence="1">Belongs to the MurCDEF family.</text>
</comment>
<proteinExistence type="inferred from homology"/>
<accession>Q2KVG1</accession>